<comment type="function">
    <text evidence="1">Catalyzes the reversible transfer of the terminal phosphate group between ATP and AMP. Plays an important role in cellular energy homeostasis and in adenine nucleotide metabolism.</text>
</comment>
<comment type="catalytic activity">
    <reaction evidence="1">
        <text>AMP + ATP = 2 ADP</text>
        <dbReference type="Rhea" id="RHEA:12973"/>
        <dbReference type="ChEBI" id="CHEBI:30616"/>
        <dbReference type="ChEBI" id="CHEBI:456215"/>
        <dbReference type="ChEBI" id="CHEBI:456216"/>
        <dbReference type="EC" id="2.7.4.3"/>
    </reaction>
</comment>
<comment type="pathway">
    <text evidence="1">Purine metabolism; AMP biosynthesis via salvage pathway; AMP from ADP: step 1/1.</text>
</comment>
<comment type="subunit">
    <text evidence="1">Monomer.</text>
</comment>
<comment type="subcellular location">
    <subcellularLocation>
        <location evidence="1">Cytoplasm</location>
    </subcellularLocation>
</comment>
<comment type="domain">
    <text evidence="1">Consists of three domains, a large central CORE domain and two small peripheral domains, NMPbind and LID, which undergo movements during catalysis. The LID domain closes over the site of phosphoryl transfer upon ATP binding. Assembling and dissambling the active center during each catalytic cycle provides an effective means to prevent ATP hydrolysis. Some bacteria have evolved a zinc-coordinating structure that stabilizes the LID domain.</text>
</comment>
<comment type="similarity">
    <text evidence="1">Belongs to the adenylate kinase family.</text>
</comment>
<gene>
    <name evidence="1" type="primary">adk</name>
    <name type="ordered locus">GSU2836</name>
</gene>
<keyword id="KW-0067">ATP-binding</keyword>
<keyword id="KW-0963">Cytoplasm</keyword>
<keyword id="KW-0418">Kinase</keyword>
<keyword id="KW-0479">Metal-binding</keyword>
<keyword id="KW-0545">Nucleotide biosynthesis</keyword>
<keyword id="KW-0547">Nucleotide-binding</keyword>
<keyword id="KW-1185">Reference proteome</keyword>
<keyword id="KW-0808">Transferase</keyword>
<keyword id="KW-0862">Zinc</keyword>
<reference key="1">
    <citation type="journal article" date="2003" name="Science">
        <title>Genome of Geobacter sulfurreducens: metal reduction in subsurface environments.</title>
        <authorList>
            <person name="Methe B.A."/>
            <person name="Nelson K.E."/>
            <person name="Eisen J.A."/>
            <person name="Paulsen I.T."/>
            <person name="Nelson W.C."/>
            <person name="Heidelberg J.F."/>
            <person name="Wu D."/>
            <person name="Wu M."/>
            <person name="Ward N.L."/>
            <person name="Beanan M.J."/>
            <person name="Dodson R.J."/>
            <person name="Madupu R."/>
            <person name="Brinkac L.M."/>
            <person name="Daugherty S.C."/>
            <person name="DeBoy R.T."/>
            <person name="Durkin A.S."/>
            <person name="Gwinn M.L."/>
            <person name="Kolonay J.F."/>
            <person name="Sullivan S.A."/>
            <person name="Haft D.H."/>
            <person name="Selengut J."/>
            <person name="Davidsen T.M."/>
            <person name="Zafar N."/>
            <person name="White O."/>
            <person name="Tran B."/>
            <person name="Romero C."/>
            <person name="Forberger H.A."/>
            <person name="Weidman J.F."/>
            <person name="Khouri H.M."/>
            <person name="Feldblyum T.V."/>
            <person name="Utterback T.R."/>
            <person name="Van Aken S.E."/>
            <person name="Lovley D.R."/>
            <person name="Fraser C.M."/>
        </authorList>
    </citation>
    <scope>NUCLEOTIDE SEQUENCE [LARGE SCALE GENOMIC DNA]</scope>
    <source>
        <strain>ATCC 51573 / DSM 12127 / PCA</strain>
    </source>
</reference>
<evidence type="ECO:0000255" key="1">
    <source>
        <dbReference type="HAMAP-Rule" id="MF_00235"/>
    </source>
</evidence>
<feature type="chain" id="PRO_0000158773" description="Adenylate kinase">
    <location>
        <begin position="1"/>
        <end position="217"/>
    </location>
</feature>
<feature type="region of interest" description="NMP" evidence="1">
    <location>
        <begin position="30"/>
        <end position="59"/>
    </location>
</feature>
<feature type="region of interest" description="LID" evidence="1">
    <location>
        <begin position="126"/>
        <end position="163"/>
    </location>
</feature>
<feature type="binding site" evidence="1">
    <location>
        <begin position="10"/>
        <end position="15"/>
    </location>
    <ligand>
        <name>ATP</name>
        <dbReference type="ChEBI" id="CHEBI:30616"/>
    </ligand>
</feature>
<feature type="binding site" evidence="1">
    <location>
        <position position="31"/>
    </location>
    <ligand>
        <name>AMP</name>
        <dbReference type="ChEBI" id="CHEBI:456215"/>
    </ligand>
</feature>
<feature type="binding site" evidence="1">
    <location>
        <position position="36"/>
    </location>
    <ligand>
        <name>AMP</name>
        <dbReference type="ChEBI" id="CHEBI:456215"/>
    </ligand>
</feature>
<feature type="binding site" evidence="1">
    <location>
        <begin position="57"/>
        <end position="59"/>
    </location>
    <ligand>
        <name>AMP</name>
        <dbReference type="ChEBI" id="CHEBI:456215"/>
    </ligand>
</feature>
<feature type="binding site" evidence="1">
    <location>
        <begin position="85"/>
        <end position="88"/>
    </location>
    <ligand>
        <name>AMP</name>
        <dbReference type="ChEBI" id="CHEBI:456215"/>
    </ligand>
</feature>
<feature type="binding site" evidence="1">
    <location>
        <position position="92"/>
    </location>
    <ligand>
        <name>AMP</name>
        <dbReference type="ChEBI" id="CHEBI:456215"/>
    </ligand>
</feature>
<feature type="binding site" evidence="1">
    <location>
        <position position="127"/>
    </location>
    <ligand>
        <name>ATP</name>
        <dbReference type="ChEBI" id="CHEBI:30616"/>
    </ligand>
</feature>
<feature type="binding site" evidence="1">
    <location>
        <position position="130"/>
    </location>
    <ligand>
        <name>Zn(2+)</name>
        <dbReference type="ChEBI" id="CHEBI:29105"/>
        <note>structural</note>
    </ligand>
</feature>
<feature type="binding site" evidence="1">
    <location>
        <position position="133"/>
    </location>
    <ligand>
        <name>Zn(2+)</name>
        <dbReference type="ChEBI" id="CHEBI:29105"/>
        <note>structural</note>
    </ligand>
</feature>
<feature type="binding site" evidence="1">
    <location>
        <position position="150"/>
    </location>
    <ligand>
        <name>Zn(2+)</name>
        <dbReference type="ChEBI" id="CHEBI:29105"/>
        <note>structural</note>
    </ligand>
</feature>
<feature type="binding site" evidence="1">
    <location>
        <position position="153"/>
    </location>
    <ligand>
        <name>Zn(2+)</name>
        <dbReference type="ChEBI" id="CHEBI:29105"/>
        <note>structural</note>
    </ligand>
</feature>
<feature type="binding site" evidence="1">
    <location>
        <position position="160"/>
    </location>
    <ligand>
        <name>AMP</name>
        <dbReference type="ChEBI" id="CHEBI:456215"/>
    </ligand>
</feature>
<feature type="binding site" evidence="1">
    <location>
        <position position="171"/>
    </location>
    <ligand>
        <name>AMP</name>
        <dbReference type="ChEBI" id="CHEBI:456215"/>
    </ligand>
</feature>
<feature type="binding site" evidence="1">
    <location>
        <position position="199"/>
    </location>
    <ligand>
        <name>ATP</name>
        <dbReference type="ChEBI" id="CHEBI:30616"/>
    </ligand>
</feature>
<protein>
    <recommendedName>
        <fullName evidence="1">Adenylate kinase</fullName>
        <shortName evidence="1">AK</shortName>
        <ecNumber evidence="1">2.7.4.3</ecNumber>
    </recommendedName>
    <alternativeName>
        <fullName evidence="1">ATP-AMP transphosphorylase</fullName>
    </alternativeName>
    <alternativeName>
        <fullName evidence="1">ATP:AMP phosphotransferase</fullName>
    </alternativeName>
    <alternativeName>
        <fullName evidence="1">Adenylate monophosphate kinase</fullName>
    </alternativeName>
</protein>
<name>KAD_GEOSL</name>
<sequence>MNLVFLGPPGAGKGTQANLLTRTYEVPQISTGEILRAAVKSKTPMGVKAKEYMDQGALVPDSVVVGIVEERLASPDCASGFILDGFPRTVAQADALKQVLGALGKQIEHVVSFEVDKGVLLERIVGRRVCRACGRAFHVKFDPPLVDGVCDACGGELYQRDDDREDTMRRRLEVYDEQTAPLKSYYEGERLLRKVNALEPIEDVQRQIVKLVESCNG</sequence>
<proteinExistence type="inferred from homology"/>
<dbReference type="EC" id="2.7.4.3" evidence="1"/>
<dbReference type="EMBL" id="AE017180">
    <property type="protein sequence ID" value="AAR36229.1"/>
    <property type="molecule type" value="Genomic_DNA"/>
</dbReference>
<dbReference type="RefSeq" id="NP_953879.1">
    <property type="nucleotide sequence ID" value="NC_002939.5"/>
</dbReference>
<dbReference type="RefSeq" id="WP_010943465.1">
    <property type="nucleotide sequence ID" value="NC_002939.5"/>
</dbReference>
<dbReference type="SMR" id="Q749A8"/>
<dbReference type="FunCoup" id="Q749A8">
    <property type="interactions" value="594"/>
</dbReference>
<dbReference type="STRING" id="243231.GSU2836"/>
<dbReference type="EnsemblBacteria" id="AAR36229">
    <property type="protein sequence ID" value="AAR36229"/>
    <property type="gene ID" value="GSU2836"/>
</dbReference>
<dbReference type="KEGG" id="gsu:GSU2836"/>
<dbReference type="PATRIC" id="fig|243231.5.peg.2862"/>
<dbReference type="eggNOG" id="COG0563">
    <property type="taxonomic scope" value="Bacteria"/>
</dbReference>
<dbReference type="HOGENOM" id="CLU_032354_1_2_7"/>
<dbReference type="InParanoid" id="Q749A8"/>
<dbReference type="OrthoDB" id="9805030at2"/>
<dbReference type="UniPathway" id="UPA00588">
    <property type="reaction ID" value="UER00649"/>
</dbReference>
<dbReference type="Proteomes" id="UP000000577">
    <property type="component" value="Chromosome"/>
</dbReference>
<dbReference type="GO" id="GO:0005737">
    <property type="term" value="C:cytoplasm"/>
    <property type="evidence" value="ECO:0000318"/>
    <property type="project" value="GO_Central"/>
</dbReference>
<dbReference type="GO" id="GO:0005829">
    <property type="term" value="C:cytosol"/>
    <property type="evidence" value="ECO:0000318"/>
    <property type="project" value="GO_Central"/>
</dbReference>
<dbReference type="GO" id="GO:0004017">
    <property type="term" value="F:adenylate kinase activity"/>
    <property type="evidence" value="ECO:0000318"/>
    <property type="project" value="GO_Central"/>
</dbReference>
<dbReference type="GO" id="GO:0005524">
    <property type="term" value="F:ATP binding"/>
    <property type="evidence" value="ECO:0007669"/>
    <property type="project" value="UniProtKB-UniRule"/>
</dbReference>
<dbReference type="GO" id="GO:0004550">
    <property type="term" value="F:nucleoside diphosphate kinase activity"/>
    <property type="evidence" value="ECO:0000318"/>
    <property type="project" value="GO_Central"/>
</dbReference>
<dbReference type="GO" id="GO:0008270">
    <property type="term" value="F:zinc ion binding"/>
    <property type="evidence" value="ECO:0007669"/>
    <property type="project" value="UniProtKB-UniRule"/>
</dbReference>
<dbReference type="GO" id="GO:0044209">
    <property type="term" value="P:AMP salvage"/>
    <property type="evidence" value="ECO:0007669"/>
    <property type="project" value="UniProtKB-UniRule"/>
</dbReference>
<dbReference type="GO" id="GO:0009132">
    <property type="term" value="P:nucleoside diphosphate metabolic process"/>
    <property type="evidence" value="ECO:0000318"/>
    <property type="project" value="GO_Central"/>
</dbReference>
<dbReference type="GO" id="GO:0009123">
    <property type="term" value="P:nucleoside monophosphate metabolic process"/>
    <property type="evidence" value="ECO:0000318"/>
    <property type="project" value="GO_Central"/>
</dbReference>
<dbReference type="CDD" id="cd01428">
    <property type="entry name" value="ADK"/>
    <property type="match status" value="1"/>
</dbReference>
<dbReference type="FunFam" id="3.40.50.300:FF:000106">
    <property type="entry name" value="Adenylate kinase mitochondrial"/>
    <property type="match status" value="1"/>
</dbReference>
<dbReference type="Gene3D" id="3.40.50.300">
    <property type="entry name" value="P-loop containing nucleotide triphosphate hydrolases"/>
    <property type="match status" value="1"/>
</dbReference>
<dbReference type="HAMAP" id="MF_00235">
    <property type="entry name" value="Adenylate_kinase_Adk"/>
    <property type="match status" value="1"/>
</dbReference>
<dbReference type="InterPro" id="IPR006259">
    <property type="entry name" value="Adenyl_kin_sub"/>
</dbReference>
<dbReference type="InterPro" id="IPR000850">
    <property type="entry name" value="Adenylat/UMP-CMP_kin"/>
</dbReference>
<dbReference type="InterPro" id="IPR033690">
    <property type="entry name" value="Adenylat_kinase_CS"/>
</dbReference>
<dbReference type="InterPro" id="IPR007862">
    <property type="entry name" value="Adenylate_kinase_lid-dom"/>
</dbReference>
<dbReference type="InterPro" id="IPR027417">
    <property type="entry name" value="P-loop_NTPase"/>
</dbReference>
<dbReference type="NCBIfam" id="TIGR01351">
    <property type="entry name" value="adk"/>
    <property type="match status" value="1"/>
</dbReference>
<dbReference type="NCBIfam" id="NF001380">
    <property type="entry name" value="PRK00279.1-2"/>
    <property type="match status" value="1"/>
</dbReference>
<dbReference type="NCBIfam" id="NF001381">
    <property type="entry name" value="PRK00279.1-3"/>
    <property type="match status" value="1"/>
</dbReference>
<dbReference type="NCBIfam" id="NF011100">
    <property type="entry name" value="PRK14527.1"/>
    <property type="match status" value="1"/>
</dbReference>
<dbReference type="PANTHER" id="PTHR23359">
    <property type="entry name" value="NUCLEOTIDE KINASE"/>
    <property type="match status" value="1"/>
</dbReference>
<dbReference type="Pfam" id="PF00406">
    <property type="entry name" value="ADK"/>
    <property type="match status" value="1"/>
</dbReference>
<dbReference type="Pfam" id="PF05191">
    <property type="entry name" value="ADK_lid"/>
    <property type="match status" value="1"/>
</dbReference>
<dbReference type="PRINTS" id="PR00094">
    <property type="entry name" value="ADENYLTKNASE"/>
</dbReference>
<dbReference type="SUPFAM" id="SSF52540">
    <property type="entry name" value="P-loop containing nucleoside triphosphate hydrolases"/>
    <property type="match status" value="1"/>
</dbReference>
<dbReference type="PROSITE" id="PS00113">
    <property type="entry name" value="ADENYLATE_KINASE"/>
    <property type="match status" value="1"/>
</dbReference>
<organism>
    <name type="scientific">Geobacter sulfurreducens (strain ATCC 51573 / DSM 12127 / PCA)</name>
    <dbReference type="NCBI Taxonomy" id="243231"/>
    <lineage>
        <taxon>Bacteria</taxon>
        <taxon>Pseudomonadati</taxon>
        <taxon>Thermodesulfobacteriota</taxon>
        <taxon>Desulfuromonadia</taxon>
        <taxon>Geobacterales</taxon>
        <taxon>Geobacteraceae</taxon>
        <taxon>Geobacter</taxon>
    </lineage>
</organism>
<accession>Q749A8</accession>